<comment type="function">
    <text evidence="1">Specifically methylates guanosine-37 in various tRNAs.</text>
</comment>
<comment type="catalytic activity">
    <reaction evidence="1">
        <text>guanosine(37) in tRNA + S-adenosyl-L-methionine = N(1)-methylguanosine(37) in tRNA + S-adenosyl-L-homocysteine + H(+)</text>
        <dbReference type="Rhea" id="RHEA:36899"/>
        <dbReference type="Rhea" id="RHEA-COMP:10145"/>
        <dbReference type="Rhea" id="RHEA-COMP:10147"/>
        <dbReference type="ChEBI" id="CHEBI:15378"/>
        <dbReference type="ChEBI" id="CHEBI:57856"/>
        <dbReference type="ChEBI" id="CHEBI:59789"/>
        <dbReference type="ChEBI" id="CHEBI:73542"/>
        <dbReference type="ChEBI" id="CHEBI:74269"/>
        <dbReference type="EC" id="2.1.1.228"/>
    </reaction>
</comment>
<comment type="subunit">
    <text evidence="1">Homodimer.</text>
</comment>
<comment type="subcellular location">
    <subcellularLocation>
        <location evidence="1">Cytoplasm</location>
    </subcellularLocation>
</comment>
<comment type="similarity">
    <text evidence="1">Belongs to the RNA methyltransferase TrmD family.</text>
</comment>
<proteinExistence type="inferred from homology"/>
<protein>
    <recommendedName>
        <fullName evidence="1">tRNA (guanine-N(1)-)-methyltransferase</fullName>
        <ecNumber evidence="1">2.1.1.228</ecNumber>
    </recommendedName>
    <alternativeName>
        <fullName evidence="1">M1G-methyltransferase</fullName>
    </alternativeName>
    <alternativeName>
        <fullName evidence="1">tRNA [GM37] methyltransferase</fullName>
    </alternativeName>
</protein>
<keyword id="KW-0963">Cytoplasm</keyword>
<keyword id="KW-0489">Methyltransferase</keyword>
<keyword id="KW-0949">S-adenosyl-L-methionine</keyword>
<keyword id="KW-0808">Transferase</keyword>
<keyword id="KW-0819">tRNA processing</keyword>
<name>TRMD_NEOSM</name>
<gene>
    <name evidence="1" type="primary">trmD</name>
    <name type="ordered locus">NSE_0896</name>
</gene>
<sequence length="225" mass="24826">MRFVVLTMFPEVFPGPLGVSVIGRGLANGYWSLEVIPIRRFAVNSRVDDAPYGGGPGMVMRADVLGEAFEYANSTYQIKRRIFLSPRGTKFVQNSTANLVEADNVLLICGRFEGVDQRFLNYYNVEELSVGDYVLSGGEIAAMAVIDSCVRCIPGVLGNLQSLECESFVGSSLEYDHYTRPNSWKGLSVPEVLMSGNHRKISEWRVNSAATATGRNRPDLVEEES</sequence>
<dbReference type="EC" id="2.1.1.228" evidence="1"/>
<dbReference type="EMBL" id="CP000237">
    <property type="protein sequence ID" value="ABD45779.1"/>
    <property type="molecule type" value="Genomic_DNA"/>
</dbReference>
<dbReference type="RefSeq" id="WP_011452268.1">
    <property type="nucleotide sequence ID" value="NC_007798.1"/>
</dbReference>
<dbReference type="SMR" id="Q2GCN4"/>
<dbReference type="STRING" id="222891.NSE_0896"/>
<dbReference type="KEGG" id="nse:NSE_0896"/>
<dbReference type="eggNOG" id="COG0336">
    <property type="taxonomic scope" value="Bacteria"/>
</dbReference>
<dbReference type="HOGENOM" id="CLU_047363_0_1_5"/>
<dbReference type="OrthoDB" id="9807416at2"/>
<dbReference type="Proteomes" id="UP000001942">
    <property type="component" value="Chromosome"/>
</dbReference>
<dbReference type="GO" id="GO:0005829">
    <property type="term" value="C:cytosol"/>
    <property type="evidence" value="ECO:0007669"/>
    <property type="project" value="TreeGrafter"/>
</dbReference>
<dbReference type="GO" id="GO:0052906">
    <property type="term" value="F:tRNA (guanine(37)-N1)-methyltransferase activity"/>
    <property type="evidence" value="ECO:0007669"/>
    <property type="project" value="UniProtKB-UniRule"/>
</dbReference>
<dbReference type="GO" id="GO:0002939">
    <property type="term" value="P:tRNA N1-guanine methylation"/>
    <property type="evidence" value="ECO:0007669"/>
    <property type="project" value="TreeGrafter"/>
</dbReference>
<dbReference type="CDD" id="cd18080">
    <property type="entry name" value="TrmD-like"/>
    <property type="match status" value="1"/>
</dbReference>
<dbReference type="Gene3D" id="3.40.1280.10">
    <property type="match status" value="1"/>
</dbReference>
<dbReference type="Gene3D" id="1.10.1270.20">
    <property type="entry name" value="tRNA(m1g37)methyltransferase, domain 2"/>
    <property type="match status" value="1"/>
</dbReference>
<dbReference type="HAMAP" id="MF_00605">
    <property type="entry name" value="TrmD"/>
    <property type="match status" value="1"/>
</dbReference>
<dbReference type="InterPro" id="IPR029028">
    <property type="entry name" value="Alpha/beta_knot_MTases"/>
</dbReference>
<dbReference type="InterPro" id="IPR023148">
    <property type="entry name" value="tRNA_m1G_MeTrfase_C_sf"/>
</dbReference>
<dbReference type="InterPro" id="IPR002649">
    <property type="entry name" value="tRNA_m1G_MeTrfase_TrmD"/>
</dbReference>
<dbReference type="InterPro" id="IPR029026">
    <property type="entry name" value="tRNA_m1G_MTases_N"/>
</dbReference>
<dbReference type="InterPro" id="IPR016009">
    <property type="entry name" value="tRNA_MeTrfase_TRMD/TRM10"/>
</dbReference>
<dbReference type="NCBIfam" id="NF000648">
    <property type="entry name" value="PRK00026.1"/>
    <property type="match status" value="1"/>
</dbReference>
<dbReference type="NCBIfam" id="TIGR00088">
    <property type="entry name" value="trmD"/>
    <property type="match status" value="1"/>
</dbReference>
<dbReference type="PANTHER" id="PTHR46417">
    <property type="entry name" value="TRNA (GUANINE-N(1)-)-METHYLTRANSFERASE"/>
    <property type="match status" value="1"/>
</dbReference>
<dbReference type="PANTHER" id="PTHR46417:SF1">
    <property type="entry name" value="TRNA (GUANINE-N(1)-)-METHYLTRANSFERASE"/>
    <property type="match status" value="1"/>
</dbReference>
<dbReference type="Pfam" id="PF01746">
    <property type="entry name" value="tRNA_m1G_MT"/>
    <property type="match status" value="1"/>
</dbReference>
<dbReference type="PIRSF" id="PIRSF000386">
    <property type="entry name" value="tRNA_mtase"/>
    <property type="match status" value="1"/>
</dbReference>
<dbReference type="SUPFAM" id="SSF75217">
    <property type="entry name" value="alpha/beta knot"/>
    <property type="match status" value="1"/>
</dbReference>
<accession>Q2GCN4</accession>
<evidence type="ECO:0000255" key="1">
    <source>
        <dbReference type="HAMAP-Rule" id="MF_00605"/>
    </source>
</evidence>
<organism>
    <name type="scientific">Neorickettsia sennetsu (strain ATCC VR-367 / Miyayama)</name>
    <name type="common">Ehrlichia sennetsu</name>
    <dbReference type="NCBI Taxonomy" id="222891"/>
    <lineage>
        <taxon>Bacteria</taxon>
        <taxon>Pseudomonadati</taxon>
        <taxon>Pseudomonadota</taxon>
        <taxon>Alphaproteobacteria</taxon>
        <taxon>Rickettsiales</taxon>
        <taxon>Anaplasmataceae</taxon>
        <taxon>Neorickettsia</taxon>
    </lineage>
</organism>
<reference key="1">
    <citation type="journal article" date="2006" name="PLoS Genet.">
        <title>Comparative genomics of emerging human ehrlichiosis agents.</title>
        <authorList>
            <person name="Dunning Hotopp J.C."/>
            <person name="Lin M."/>
            <person name="Madupu R."/>
            <person name="Crabtree J."/>
            <person name="Angiuoli S.V."/>
            <person name="Eisen J.A."/>
            <person name="Seshadri R."/>
            <person name="Ren Q."/>
            <person name="Wu M."/>
            <person name="Utterback T.R."/>
            <person name="Smith S."/>
            <person name="Lewis M."/>
            <person name="Khouri H."/>
            <person name="Zhang C."/>
            <person name="Niu H."/>
            <person name="Lin Q."/>
            <person name="Ohashi N."/>
            <person name="Zhi N."/>
            <person name="Nelson W.C."/>
            <person name="Brinkac L.M."/>
            <person name="Dodson R.J."/>
            <person name="Rosovitz M.J."/>
            <person name="Sundaram J.P."/>
            <person name="Daugherty S.C."/>
            <person name="Davidsen T."/>
            <person name="Durkin A.S."/>
            <person name="Gwinn M.L."/>
            <person name="Haft D.H."/>
            <person name="Selengut J.D."/>
            <person name="Sullivan S.A."/>
            <person name="Zafar N."/>
            <person name="Zhou L."/>
            <person name="Benahmed F."/>
            <person name="Forberger H."/>
            <person name="Halpin R."/>
            <person name="Mulligan S."/>
            <person name="Robinson J."/>
            <person name="White O."/>
            <person name="Rikihisa Y."/>
            <person name="Tettelin H."/>
        </authorList>
    </citation>
    <scope>NUCLEOTIDE SEQUENCE [LARGE SCALE GENOMIC DNA]</scope>
    <source>
        <strain>ATCC VR-367 / Miyayama</strain>
    </source>
</reference>
<feature type="chain" id="PRO_0000257438" description="tRNA (guanine-N(1)-)-methyltransferase">
    <location>
        <begin position="1"/>
        <end position="225"/>
    </location>
</feature>
<feature type="binding site" evidence="1">
    <location>
        <position position="110"/>
    </location>
    <ligand>
        <name>S-adenosyl-L-methionine</name>
        <dbReference type="ChEBI" id="CHEBI:59789"/>
    </ligand>
</feature>
<feature type="binding site" evidence="1">
    <location>
        <begin position="130"/>
        <end position="135"/>
    </location>
    <ligand>
        <name>S-adenosyl-L-methionine</name>
        <dbReference type="ChEBI" id="CHEBI:59789"/>
    </ligand>
</feature>